<accession>A7IAK5</accession>
<gene>
    <name evidence="1" type="primary">rpl11</name>
    <name type="ordered locus">Mboo_2252</name>
</gene>
<comment type="function">
    <text evidence="1">Forms part of the ribosomal stalk which helps the ribosome interact with GTP-bound translation factors.</text>
</comment>
<comment type="subunit">
    <text evidence="1">Part of the ribosomal stalk of the 50S ribosomal subunit. Interacts with L10 and the large rRNA to form the base of the stalk. L10 forms an elongated spine to which L12 dimers bind in a sequential fashion forming a multimeric L10(L12)X complex.</text>
</comment>
<comment type="similarity">
    <text evidence="1">Belongs to the universal ribosomal protein uL11 family.</text>
</comment>
<reference key="1">
    <citation type="journal article" date="2015" name="Microbiology">
        <title>Genome of Methanoregula boonei 6A8 reveals adaptations to oligotrophic peatland environments.</title>
        <authorList>
            <person name="Braeuer S."/>
            <person name="Cadillo-Quiroz H."/>
            <person name="Kyrpides N."/>
            <person name="Woyke T."/>
            <person name="Goodwin L."/>
            <person name="Detter C."/>
            <person name="Podell S."/>
            <person name="Yavitt J.B."/>
            <person name="Zinder S.H."/>
        </authorList>
    </citation>
    <scope>NUCLEOTIDE SEQUENCE [LARGE SCALE GENOMIC DNA]</scope>
    <source>
        <strain>DSM 21154 / JCM 14090 / 6A8</strain>
    </source>
</reference>
<organism>
    <name type="scientific">Methanoregula boonei (strain DSM 21154 / JCM 14090 / 6A8)</name>
    <dbReference type="NCBI Taxonomy" id="456442"/>
    <lineage>
        <taxon>Archaea</taxon>
        <taxon>Methanobacteriati</taxon>
        <taxon>Methanobacteriota</taxon>
        <taxon>Stenosarchaea group</taxon>
        <taxon>Methanomicrobia</taxon>
        <taxon>Methanomicrobiales</taxon>
        <taxon>Methanoregulaceae</taxon>
        <taxon>Methanoregula</taxon>
    </lineage>
</organism>
<evidence type="ECO:0000255" key="1">
    <source>
        <dbReference type="HAMAP-Rule" id="MF_00736"/>
    </source>
</evidence>
<evidence type="ECO:0000305" key="2"/>
<keyword id="KW-1185">Reference proteome</keyword>
<keyword id="KW-0687">Ribonucleoprotein</keyword>
<keyword id="KW-0689">Ribosomal protein</keyword>
<keyword id="KW-0694">RNA-binding</keyword>
<keyword id="KW-0699">rRNA-binding</keyword>
<feature type="chain" id="PRO_1000046210" description="Large ribosomal subunit protein uL11">
    <location>
        <begin position="1"/>
        <end position="158"/>
    </location>
</feature>
<dbReference type="EMBL" id="CP000780">
    <property type="protein sequence ID" value="ABS56766.1"/>
    <property type="molecule type" value="Genomic_DNA"/>
</dbReference>
<dbReference type="RefSeq" id="WP_012107826.1">
    <property type="nucleotide sequence ID" value="NC_009712.1"/>
</dbReference>
<dbReference type="SMR" id="A7IAK5"/>
<dbReference type="STRING" id="456442.Mboo_2252"/>
<dbReference type="GeneID" id="5409940"/>
<dbReference type="KEGG" id="mbn:Mboo_2252"/>
<dbReference type="eggNOG" id="arCOG04372">
    <property type="taxonomic scope" value="Archaea"/>
</dbReference>
<dbReference type="HOGENOM" id="CLU_074237_4_0_2"/>
<dbReference type="OrthoDB" id="8842at2157"/>
<dbReference type="Proteomes" id="UP000002408">
    <property type="component" value="Chromosome"/>
</dbReference>
<dbReference type="GO" id="GO:0015934">
    <property type="term" value="C:large ribosomal subunit"/>
    <property type="evidence" value="ECO:0007669"/>
    <property type="project" value="TreeGrafter"/>
</dbReference>
<dbReference type="GO" id="GO:0070180">
    <property type="term" value="F:large ribosomal subunit rRNA binding"/>
    <property type="evidence" value="ECO:0007669"/>
    <property type="project" value="UniProtKB-UniRule"/>
</dbReference>
<dbReference type="GO" id="GO:0003735">
    <property type="term" value="F:structural constituent of ribosome"/>
    <property type="evidence" value="ECO:0007669"/>
    <property type="project" value="InterPro"/>
</dbReference>
<dbReference type="GO" id="GO:0006412">
    <property type="term" value="P:translation"/>
    <property type="evidence" value="ECO:0007669"/>
    <property type="project" value="UniProtKB-UniRule"/>
</dbReference>
<dbReference type="CDD" id="cd00349">
    <property type="entry name" value="Ribosomal_L11"/>
    <property type="match status" value="1"/>
</dbReference>
<dbReference type="FunFam" id="3.30.1550.10:FF:000007">
    <property type="entry name" value="50S ribosomal protein L11"/>
    <property type="match status" value="1"/>
</dbReference>
<dbReference type="Gene3D" id="1.10.10.250">
    <property type="entry name" value="Ribosomal protein L11, C-terminal domain"/>
    <property type="match status" value="1"/>
</dbReference>
<dbReference type="Gene3D" id="3.30.1550.10">
    <property type="entry name" value="Ribosomal protein L11/L12, N-terminal domain"/>
    <property type="match status" value="1"/>
</dbReference>
<dbReference type="HAMAP" id="MF_00736">
    <property type="entry name" value="Ribosomal_uL11"/>
    <property type="match status" value="1"/>
</dbReference>
<dbReference type="InterPro" id="IPR000911">
    <property type="entry name" value="Ribosomal_uL11"/>
</dbReference>
<dbReference type="InterPro" id="IPR020783">
    <property type="entry name" value="Ribosomal_uL11_C"/>
</dbReference>
<dbReference type="InterPro" id="IPR036769">
    <property type="entry name" value="Ribosomal_uL11_C_sf"/>
</dbReference>
<dbReference type="InterPro" id="IPR020785">
    <property type="entry name" value="Ribosomal_uL11_CS"/>
</dbReference>
<dbReference type="InterPro" id="IPR020784">
    <property type="entry name" value="Ribosomal_uL11_N"/>
</dbReference>
<dbReference type="InterPro" id="IPR036796">
    <property type="entry name" value="Ribosomal_uL11_N_sf"/>
</dbReference>
<dbReference type="NCBIfam" id="NF002232">
    <property type="entry name" value="PRK01143.1"/>
    <property type="match status" value="1"/>
</dbReference>
<dbReference type="PANTHER" id="PTHR11661">
    <property type="entry name" value="60S RIBOSOMAL PROTEIN L12"/>
    <property type="match status" value="1"/>
</dbReference>
<dbReference type="PANTHER" id="PTHR11661:SF1">
    <property type="entry name" value="LARGE RIBOSOMAL SUBUNIT PROTEIN UL11M"/>
    <property type="match status" value="1"/>
</dbReference>
<dbReference type="Pfam" id="PF00298">
    <property type="entry name" value="Ribosomal_L11"/>
    <property type="match status" value="1"/>
</dbReference>
<dbReference type="Pfam" id="PF03946">
    <property type="entry name" value="Ribosomal_L11_N"/>
    <property type="match status" value="1"/>
</dbReference>
<dbReference type="SMART" id="SM00649">
    <property type="entry name" value="RL11"/>
    <property type="match status" value="1"/>
</dbReference>
<dbReference type="SUPFAM" id="SSF54747">
    <property type="entry name" value="Ribosomal L11/L12e N-terminal domain"/>
    <property type="match status" value="1"/>
</dbReference>
<dbReference type="SUPFAM" id="SSF46906">
    <property type="entry name" value="Ribosomal protein L11, C-terminal domain"/>
    <property type="match status" value="1"/>
</dbReference>
<dbReference type="PROSITE" id="PS00359">
    <property type="entry name" value="RIBOSOMAL_L11"/>
    <property type="match status" value="1"/>
</dbReference>
<protein>
    <recommendedName>
        <fullName evidence="1">Large ribosomal subunit protein uL11</fullName>
    </recommendedName>
    <alternativeName>
        <fullName evidence="2">50S ribosomal protein L11</fullName>
    </alternativeName>
</protein>
<name>RL11_METB6</name>
<proteinExistence type="inferred from homology"/>
<sequence length="158" mass="16409">MAEVVEVLVPGGKATAGPPLGPALGPLGINVKAVVDEINAKTASFNGMQVPVKVEVNDKKQFTVTVGIPPTTALIKKEANIEKGSAEPNAKVAGNLPFEAAVRIAKMKLEGMLSYELKTATKEVVGTCVSMGVNVDGKRPKEVLADIAAGKYDSVLLK</sequence>